<keyword id="KW-0030">Aminoacyl-tRNA synthetase</keyword>
<keyword id="KW-0067">ATP-binding</keyword>
<keyword id="KW-0963">Cytoplasm</keyword>
<keyword id="KW-0436">Ligase</keyword>
<keyword id="KW-0547">Nucleotide-binding</keyword>
<keyword id="KW-0648">Protein biosynthesis</keyword>
<keyword id="KW-1185">Reference proteome</keyword>
<proteinExistence type="inferred from homology"/>
<dbReference type="EC" id="6.1.1.17" evidence="1"/>
<dbReference type="EMBL" id="AE008692">
    <property type="protein sequence ID" value="AAV90588.1"/>
    <property type="molecule type" value="Genomic_DNA"/>
</dbReference>
<dbReference type="SMR" id="Q5NL22"/>
<dbReference type="STRING" id="264203.ZMO1964"/>
<dbReference type="KEGG" id="zmo:ZMO1964"/>
<dbReference type="eggNOG" id="COG0008">
    <property type="taxonomic scope" value="Bacteria"/>
</dbReference>
<dbReference type="HOGENOM" id="CLU_015768_6_3_5"/>
<dbReference type="Proteomes" id="UP000001173">
    <property type="component" value="Chromosome"/>
</dbReference>
<dbReference type="GO" id="GO:0005829">
    <property type="term" value="C:cytosol"/>
    <property type="evidence" value="ECO:0007669"/>
    <property type="project" value="TreeGrafter"/>
</dbReference>
<dbReference type="GO" id="GO:0005524">
    <property type="term" value="F:ATP binding"/>
    <property type="evidence" value="ECO:0007669"/>
    <property type="project" value="UniProtKB-UniRule"/>
</dbReference>
<dbReference type="GO" id="GO:0004818">
    <property type="term" value="F:glutamate-tRNA ligase activity"/>
    <property type="evidence" value="ECO:0007669"/>
    <property type="project" value="UniProtKB-UniRule"/>
</dbReference>
<dbReference type="GO" id="GO:0000049">
    <property type="term" value="F:tRNA binding"/>
    <property type="evidence" value="ECO:0007669"/>
    <property type="project" value="InterPro"/>
</dbReference>
<dbReference type="GO" id="GO:0008270">
    <property type="term" value="F:zinc ion binding"/>
    <property type="evidence" value="ECO:0007669"/>
    <property type="project" value="InterPro"/>
</dbReference>
<dbReference type="GO" id="GO:0006424">
    <property type="term" value="P:glutamyl-tRNA aminoacylation"/>
    <property type="evidence" value="ECO:0007669"/>
    <property type="project" value="UniProtKB-UniRule"/>
</dbReference>
<dbReference type="CDD" id="cd00808">
    <property type="entry name" value="GluRS_core"/>
    <property type="match status" value="1"/>
</dbReference>
<dbReference type="FunFam" id="3.40.50.620:FF:000007">
    <property type="entry name" value="Glutamate--tRNA ligase"/>
    <property type="match status" value="1"/>
</dbReference>
<dbReference type="Gene3D" id="1.10.10.350">
    <property type="match status" value="1"/>
</dbReference>
<dbReference type="Gene3D" id="3.40.50.620">
    <property type="entry name" value="HUPs"/>
    <property type="match status" value="1"/>
</dbReference>
<dbReference type="HAMAP" id="MF_00022">
    <property type="entry name" value="Glu_tRNA_synth_type1"/>
    <property type="match status" value="1"/>
</dbReference>
<dbReference type="InterPro" id="IPR045462">
    <property type="entry name" value="aa-tRNA-synth_I_cd-bd"/>
</dbReference>
<dbReference type="InterPro" id="IPR020751">
    <property type="entry name" value="aa-tRNA-synth_I_codon-bd_sub2"/>
</dbReference>
<dbReference type="InterPro" id="IPR001412">
    <property type="entry name" value="aa-tRNA-synth_I_CS"/>
</dbReference>
<dbReference type="InterPro" id="IPR008925">
    <property type="entry name" value="aa_tRNA-synth_I_cd-bd_sf"/>
</dbReference>
<dbReference type="InterPro" id="IPR004527">
    <property type="entry name" value="Glu-tRNA-ligase_bac/mito"/>
</dbReference>
<dbReference type="InterPro" id="IPR000924">
    <property type="entry name" value="Glu/Gln-tRNA-synth"/>
</dbReference>
<dbReference type="InterPro" id="IPR020058">
    <property type="entry name" value="Glu/Gln-tRNA-synth_Ib_cat-dom"/>
</dbReference>
<dbReference type="InterPro" id="IPR049940">
    <property type="entry name" value="GluQ/Sye"/>
</dbReference>
<dbReference type="InterPro" id="IPR033910">
    <property type="entry name" value="GluRS_core"/>
</dbReference>
<dbReference type="InterPro" id="IPR014729">
    <property type="entry name" value="Rossmann-like_a/b/a_fold"/>
</dbReference>
<dbReference type="NCBIfam" id="TIGR00464">
    <property type="entry name" value="gltX_bact"/>
    <property type="match status" value="1"/>
</dbReference>
<dbReference type="PANTHER" id="PTHR43311">
    <property type="entry name" value="GLUTAMATE--TRNA LIGASE"/>
    <property type="match status" value="1"/>
</dbReference>
<dbReference type="PANTHER" id="PTHR43311:SF2">
    <property type="entry name" value="GLUTAMATE--TRNA LIGASE, MITOCHONDRIAL-RELATED"/>
    <property type="match status" value="1"/>
</dbReference>
<dbReference type="Pfam" id="PF19269">
    <property type="entry name" value="Anticodon_2"/>
    <property type="match status" value="1"/>
</dbReference>
<dbReference type="Pfam" id="PF00749">
    <property type="entry name" value="tRNA-synt_1c"/>
    <property type="match status" value="1"/>
</dbReference>
<dbReference type="PRINTS" id="PR00987">
    <property type="entry name" value="TRNASYNTHGLU"/>
</dbReference>
<dbReference type="SUPFAM" id="SSF48163">
    <property type="entry name" value="An anticodon-binding domain of class I aminoacyl-tRNA synthetases"/>
    <property type="match status" value="1"/>
</dbReference>
<dbReference type="SUPFAM" id="SSF52374">
    <property type="entry name" value="Nucleotidylyl transferase"/>
    <property type="match status" value="1"/>
</dbReference>
<dbReference type="PROSITE" id="PS00178">
    <property type="entry name" value="AA_TRNA_LIGASE_I"/>
    <property type="match status" value="1"/>
</dbReference>
<protein>
    <recommendedName>
        <fullName evidence="1">Glutamate--tRNA ligase 2</fullName>
        <ecNumber evidence="1">6.1.1.17</ecNumber>
    </recommendedName>
    <alternativeName>
        <fullName evidence="1">Glutamyl-tRNA synthetase 2</fullName>
        <shortName evidence="1">GluRS 2</shortName>
    </alternativeName>
</protein>
<comment type="function">
    <text evidence="1">Catalyzes the attachment of glutamate to tRNA(Glu) in a two-step reaction: glutamate is first activated by ATP to form Glu-AMP and then transferred to the acceptor end of tRNA(Glu).</text>
</comment>
<comment type="catalytic activity">
    <reaction evidence="1">
        <text>tRNA(Glu) + L-glutamate + ATP = L-glutamyl-tRNA(Glu) + AMP + diphosphate</text>
        <dbReference type="Rhea" id="RHEA:23540"/>
        <dbReference type="Rhea" id="RHEA-COMP:9663"/>
        <dbReference type="Rhea" id="RHEA-COMP:9680"/>
        <dbReference type="ChEBI" id="CHEBI:29985"/>
        <dbReference type="ChEBI" id="CHEBI:30616"/>
        <dbReference type="ChEBI" id="CHEBI:33019"/>
        <dbReference type="ChEBI" id="CHEBI:78442"/>
        <dbReference type="ChEBI" id="CHEBI:78520"/>
        <dbReference type="ChEBI" id="CHEBI:456215"/>
        <dbReference type="EC" id="6.1.1.17"/>
    </reaction>
</comment>
<comment type="subunit">
    <text evidence="1">Monomer.</text>
</comment>
<comment type="subcellular location">
    <subcellularLocation>
        <location evidence="1">Cytoplasm</location>
    </subcellularLocation>
</comment>
<comment type="similarity">
    <text evidence="1">Belongs to the class-I aminoacyl-tRNA synthetase family. Glutamate--tRNA ligase type 1 subfamily.</text>
</comment>
<accession>Q5NL22</accession>
<feature type="chain" id="PRO_0000119711" description="Glutamate--tRNA ligase 2">
    <location>
        <begin position="1"/>
        <end position="481"/>
    </location>
</feature>
<feature type="region of interest" description="Disordered" evidence="2">
    <location>
        <begin position="118"/>
        <end position="143"/>
    </location>
</feature>
<feature type="short sequence motif" description="'HIGH' region" evidence="1">
    <location>
        <begin position="17"/>
        <end position="27"/>
    </location>
</feature>
<feature type="short sequence motif" description="'KMSKS' region" evidence="1">
    <location>
        <begin position="246"/>
        <end position="250"/>
    </location>
</feature>
<feature type="compositionally biased region" description="Basic and acidic residues" evidence="2">
    <location>
        <begin position="118"/>
        <end position="139"/>
    </location>
</feature>
<feature type="binding site" evidence="1">
    <location>
        <position position="249"/>
    </location>
    <ligand>
        <name>ATP</name>
        <dbReference type="ChEBI" id="CHEBI:30616"/>
    </ligand>
</feature>
<gene>
    <name evidence="1" type="primary">gltX2</name>
    <name type="ordered locus">ZMO1964</name>
</gene>
<organism>
    <name type="scientific">Zymomonas mobilis subsp. mobilis (strain ATCC 31821 / ZM4 / CP4)</name>
    <dbReference type="NCBI Taxonomy" id="264203"/>
    <lineage>
        <taxon>Bacteria</taxon>
        <taxon>Pseudomonadati</taxon>
        <taxon>Pseudomonadota</taxon>
        <taxon>Alphaproteobacteria</taxon>
        <taxon>Sphingomonadales</taxon>
        <taxon>Zymomonadaceae</taxon>
        <taxon>Zymomonas</taxon>
    </lineage>
</organism>
<sequence>MSAGPAKNPSVVTRFAPSPTGFLHIGGARTALFNWLFARHNGGQFQLRIEDTDRVRSTKEAIDAIIDGMRWLGLDWDGDITYQFERAPRHTEVAEELLKAGKAYKCFATAEELEAMRAEQRAKKQPQRYDGRWRDRDPSEAPAGAPYVVRLKAEQEGETTLHDLVQGDVTVKNAELDDMILLRSDGTPTYMLAVVVDDHDMGVNHVIRGDDHLNNTFRQLGIIRAMNWDAPQYAHIPLIHGADGAKLSKRHGALGVEAYRDDFGYLPEAICNYLLRLGWGHGDDEIITREQAIEWFDLTSVGRSPSRFDFKKLENINGHYIREADDQRLTDLVKPRVEKTLEQGLSSTEQALLLQAMPFLKPRAKNLNELAENSLFLFEKRPLKLEEKAAKQLENTSGSLLAILRKTLGDLPAWDSESLEKALHDVAEQADLKMGKVAQPLRAALTGRTVSPGIFDVMILLGQDESLARLDDQLSLSPTHS</sequence>
<evidence type="ECO:0000255" key="1">
    <source>
        <dbReference type="HAMAP-Rule" id="MF_00022"/>
    </source>
</evidence>
<evidence type="ECO:0000256" key="2">
    <source>
        <dbReference type="SAM" id="MobiDB-lite"/>
    </source>
</evidence>
<reference key="1">
    <citation type="journal article" date="2005" name="Nat. Biotechnol.">
        <title>The genome sequence of the ethanologenic bacterium Zymomonas mobilis ZM4.</title>
        <authorList>
            <person name="Seo J.-S."/>
            <person name="Chong H."/>
            <person name="Park H.S."/>
            <person name="Yoon K.-O."/>
            <person name="Jung C."/>
            <person name="Kim J.J."/>
            <person name="Hong J.H."/>
            <person name="Kim H."/>
            <person name="Kim J.-H."/>
            <person name="Kil J.-I."/>
            <person name="Park C.J."/>
            <person name="Oh H.-M."/>
            <person name="Lee J.-S."/>
            <person name="Jin S.-J."/>
            <person name="Um H.-W."/>
            <person name="Lee H.-J."/>
            <person name="Oh S.-J."/>
            <person name="Kim J.Y."/>
            <person name="Kang H.L."/>
            <person name="Lee S.Y."/>
            <person name="Lee K.J."/>
            <person name="Kang H.S."/>
        </authorList>
    </citation>
    <scope>NUCLEOTIDE SEQUENCE [LARGE SCALE GENOMIC DNA]</scope>
    <source>
        <strain>ATCC 31821 / ZM4 / CP4</strain>
    </source>
</reference>
<name>SYE2_ZYMMO</name>